<proteinExistence type="evidence at protein level"/>
<comment type="function">
    <text evidence="4">Catalyzes the hydrolysis of the amide bond in N-(4-oxoglutarate)-L-cysteinylglycine (deaminated glutathione), a metabolite repair reaction to dispose of the harmful deaminated glutathione (PubMed:28373563). Possesses amidase activity toward deaminated ophthalmate in vitro (PubMed:28373563).</text>
</comment>
<comment type="catalytic activity">
    <reaction evidence="4">
        <text>N-(4-oxoglutaryl)-L-cysteinylglycine + H2O = L-cysteinylglycine + 2-oxoglutarate</text>
        <dbReference type="Rhea" id="RHEA:54532"/>
        <dbReference type="ChEBI" id="CHEBI:15377"/>
        <dbReference type="ChEBI" id="CHEBI:16810"/>
        <dbReference type="ChEBI" id="CHEBI:61694"/>
        <dbReference type="ChEBI" id="CHEBI:138256"/>
        <dbReference type="EC" id="3.5.1.128"/>
    </reaction>
</comment>
<comment type="catalytic activity">
    <reaction evidence="4">
        <text>N-(4-carboxy-4-oxobutanoyl)-L-ethylglycylglycine + H2O = N-(2-aminobutanoyl)glycine + 2-oxoglutarate</text>
        <dbReference type="Rhea" id="RHEA:17125"/>
        <dbReference type="ChEBI" id="CHEBI:15377"/>
        <dbReference type="ChEBI" id="CHEBI:16810"/>
        <dbReference type="ChEBI" id="CHEBI:144697"/>
        <dbReference type="ChEBI" id="CHEBI:144699"/>
    </reaction>
    <physiologicalReaction direction="left-to-right" evidence="4">
        <dbReference type="Rhea" id="RHEA:17126"/>
    </physiologicalReaction>
</comment>
<comment type="biophysicochemical properties">
    <kinetics>
        <KM evidence="4">45 uM for N-(4-oxoglutarate)-L-cysteinylglycine (at pH 8.5)</KM>
        <Vmax evidence="4">5.8 umol/min/mg enzyme with N-(4-oxoglutarate)-L-cysteinylglycine as substrate (at pH 8.5)</Vmax>
        <text evidence="4">kcat is 3.6 sec(-1) with N-(4-oxoglutarate)-L-cysteinylglycine as substrate.</text>
    </kinetics>
</comment>
<comment type="subunit">
    <text evidence="3">Homodimer.</text>
</comment>
<comment type="subcellular location">
    <subcellularLocation>
        <location evidence="1">Cytoplasm</location>
    </subcellularLocation>
    <subcellularLocation>
        <location evidence="1">Mitochondrion</location>
    </subcellularLocation>
</comment>
<comment type="similarity">
    <text evidence="6">Belongs to the carbon-nitrogen hydrolase superfamily. NIT1/NIT2 family.</text>
</comment>
<keyword id="KW-0002">3D-structure</keyword>
<keyword id="KW-0963">Cytoplasm</keyword>
<keyword id="KW-0378">Hydrolase</keyword>
<keyword id="KW-0496">Mitochondrion</keyword>
<keyword id="KW-1185">Reference proteome</keyword>
<gene>
    <name type="primary">NIT2</name>
    <name type="ordered locus">YJL126W</name>
    <name type="ORF">J0706</name>
</gene>
<dbReference type="EC" id="3.5.1.128" evidence="4"/>
<dbReference type="EMBL" id="AF284571">
    <property type="protein sequence ID" value="AAF87100.1"/>
    <property type="molecule type" value="Genomic_DNA"/>
</dbReference>
<dbReference type="EMBL" id="Z49401">
    <property type="protein sequence ID" value="CAA89421.1"/>
    <property type="molecule type" value="Genomic_DNA"/>
</dbReference>
<dbReference type="EMBL" id="BK006943">
    <property type="protein sequence ID" value="DAA08676.1"/>
    <property type="molecule type" value="Genomic_DNA"/>
</dbReference>
<dbReference type="PIR" id="S56907">
    <property type="entry name" value="S56907"/>
</dbReference>
<dbReference type="RefSeq" id="NP_012409.1">
    <property type="nucleotide sequence ID" value="NM_001181559.1"/>
</dbReference>
<dbReference type="PDB" id="4H5U">
    <property type="method" value="X-ray"/>
    <property type="resolution" value="1.92 A"/>
    <property type="chains" value="A/B/C/D=1-307"/>
</dbReference>
<dbReference type="PDB" id="4HG3">
    <property type="method" value="X-ray"/>
    <property type="resolution" value="1.93 A"/>
    <property type="chains" value="A/B/C/D=1-307"/>
</dbReference>
<dbReference type="PDB" id="4HG5">
    <property type="method" value="X-ray"/>
    <property type="resolution" value="1.91 A"/>
    <property type="chains" value="A/B/C/D=1-307"/>
</dbReference>
<dbReference type="PDB" id="4HGD">
    <property type="method" value="X-ray"/>
    <property type="resolution" value="2.04 A"/>
    <property type="chains" value="A/B/C/D=1-307"/>
</dbReference>
<dbReference type="PDBsum" id="4H5U"/>
<dbReference type="PDBsum" id="4HG3"/>
<dbReference type="PDBsum" id="4HG5"/>
<dbReference type="PDBsum" id="4HGD"/>
<dbReference type="SMR" id="P47016"/>
<dbReference type="BioGRID" id="33630">
    <property type="interactions" value="40"/>
</dbReference>
<dbReference type="FunCoup" id="P47016">
    <property type="interactions" value="133"/>
</dbReference>
<dbReference type="STRING" id="4932.YJL126W"/>
<dbReference type="iPTMnet" id="P47016"/>
<dbReference type="PaxDb" id="4932-YJL126W"/>
<dbReference type="PeptideAtlas" id="P47016"/>
<dbReference type="EnsemblFungi" id="YJL126W_mRNA">
    <property type="protein sequence ID" value="YJL126W"/>
    <property type="gene ID" value="YJL126W"/>
</dbReference>
<dbReference type="GeneID" id="853316"/>
<dbReference type="KEGG" id="sce:YJL126W"/>
<dbReference type="AGR" id="SGD:S000003662"/>
<dbReference type="SGD" id="S000003662">
    <property type="gene designation" value="NIT2"/>
</dbReference>
<dbReference type="VEuPathDB" id="FungiDB:YJL126W"/>
<dbReference type="eggNOG" id="KOG0807">
    <property type="taxonomic scope" value="Eukaryota"/>
</dbReference>
<dbReference type="GeneTree" id="ENSGT00550000075099"/>
<dbReference type="HOGENOM" id="CLU_030130_1_2_1"/>
<dbReference type="InParanoid" id="P47016"/>
<dbReference type="OMA" id="MRVAVCQ"/>
<dbReference type="OrthoDB" id="10250282at2759"/>
<dbReference type="BioCyc" id="YEAST:YJL126W-MONOMER"/>
<dbReference type="BRENDA" id="3.5.1.128">
    <property type="organism ID" value="984"/>
</dbReference>
<dbReference type="BioGRID-ORCS" id="853316">
    <property type="hits" value="0 hits in 10 CRISPR screens"/>
</dbReference>
<dbReference type="EvolutionaryTrace" id="P47016"/>
<dbReference type="PRO" id="PR:P47016"/>
<dbReference type="Proteomes" id="UP000002311">
    <property type="component" value="Chromosome X"/>
</dbReference>
<dbReference type="RNAct" id="P47016">
    <property type="molecule type" value="protein"/>
</dbReference>
<dbReference type="GO" id="GO:0005739">
    <property type="term" value="C:mitochondrion"/>
    <property type="evidence" value="ECO:0007669"/>
    <property type="project" value="UniProtKB-SubCell"/>
</dbReference>
<dbReference type="GO" id="GO:0050406">
    <property type="term" value="F:[acetyl-CoA carboxylase]-phosphatase activity"/>
    <property type="evidence" value="ECO:0007669"/>
    <property type="project" value="RHEA"/>
</dbReference>
<dbReference type="GO" id="GO:0110050">
    <property type="term" value="F:deaminated glutathione amidase activity"/>
    <property type="evidence" value="ECO:0000314"/>
    <property type="project" value="SGD"/>
</dbReference>
<dbReference type="GO" id="GO:0043605">
    <property type="term" value="P:amide catabolic process"/>
    <property type="evidence" value="ECO:0000314"/>
    <property type="project" value="SGD"/>
</dbReference>
<dbReference type="CDD" id="cd07572">
    <property type="entry name" value="nit"/>
    <property type="match status" value="1"/>
</dbReference>
<dbReference type="FunFam" id="3.60.110.10:FF:000024">
    <property type="entry name" value="Deaminated glutathione amidase"/>
    <property type="match status" value="1"/>
</dbReference>
<dbReference type="Gene3D" id="3.60.110.10">
    <property type="entry name" value="Carbon-nitrogen hydrolase"/>
    <property type="match status" value="1"/>
</dbReference>
<dbReference type="InterPro" id="IPR003010">
    <property type="entry name" value="C-N_Hydrolase"/>
</dbReference>
<dbReference type="InterPro" id="IPR036526">
    <property type="entry name" value="C-N_Hydrolase_sf"/>
</dbReference>
<dbReference type="InterPro" id="IPR045254">
    <property type="entry name" value="Nit1/2_C-N_Hydrolase"/>
</dbReference>
<dbReference type="InterPro" id="IPR001110">
    <property type="entry name" value="UPF0012_CS"/>
</dbReference>
<dbReference type="PANTHER" id="PTHR23088:SF27">
    <property type="entry name" value="DEAMINATED GLUTATHIONE AMIDASE"/>
    <property type="match status" value="1"/>
</dbReference>
<dbReference type="PANTHER" id="PTHR23088">
    <property type="entry name" value="NITRILASE-RELATED"/>
    <property type="match status" value="1"/>
</dbReference>
<dbReference type="Pfam" id="PF00795">
    <property type="entry name" value="CN_hydrolase"/>
    <property type="match status" value="1"/>
</dbReference>
<dbReference type="SUPFAM" id="SSF56317">
    <property type="entry name" value="Carbon-nitrogen hydrolase"/>
    <property type="match status" value="1"/>
</dbReference>
<dbReference type="PROSITE" id="PS50263">
    <property type="entry name" value="CN_HYDROLASE"/>
    <property type="match status" value="1"/>
</dbReference>
<dbReference type="PROSITE" id="PS01227">
    <property type="entry name" value="UPF0012"/>
    <property type="match status" value="1"/>
</dbReference>
<reference key="1">
    <citation type="journal article" date="2000" name="Curr. Biol.">
        <title>Crystal structure of the worm NitFhit Rosetta stone protein reveals a Nit tetramer binding two Fhit dimers.</title>
        <authorList>
            <person name="Pace H.C."/>
            <person name="Hodawadekar S.C."/>
            <person name="Draganescu A."/>
            <person name="Huang J."/>
            <person name="Bieganowski P."/>
            <person name="Pekarsky Y."/>
            <person name="Croce C.M."/>
            <person name="Brenner C."/>
        </authorList>
    </citation>
    <scope>NUCLEOTIDE SEQUENCE [GENOMIC DNA]</scope>
</reference>
<reference key="2">
    <citation type="journal article" date="1996" name="Yeast">
        <title>Sequencing analysis of a 40.2 kb fragment of yeast chromosome X reveals 19 open reading frames including URA2 (5' end), TRK1, PBS2, SPT10, GCD14, RPE1, PHO86, NCA3, ASF1, CCT7, GZF3, two tRNA genes, three remnant delta elements and a Ty4 transposon.</title>
        <authorList>
            <person name="Cziepluch C."/>
            <person name="Kordes E."/>
            <person name="Pujol A."/>
            <person name="Jauniaux J.-C."/>
        </authorList>
    </citation>
    <scope>NUCLEOTIDE SEQUENCE [GENOMIC DNA]</scope>
    <source>
        <strain>ATCC 96604 / S288c / FY1679</strain>
    </source>
</reference>
<reference key="3">
    <citation type="journal article" date="1996" name="EMBO J.">
        <title>Complete nucleotide sequence of Saccharomyces cerevisiae chromosome X.</title>
        <authorList>
            <person name="Galibert F."/>
            <person name="Alexandraki D."/>
            <person name="Baur A."/>
            <person name="Boles E."/>
            <person name="Chalwatzis N."/>
            <person name="Chuat J.-C."/>
            <person name="Coster F."/>
            <person name="Cziepluch C."/>
            <person name="de Haan M."/>
            <person name="Domdey H."/>
            <person name="Durand P."/>
            <person name="Entian K.-D."/>
            <person name="Gatius M."/>
            <person name="Goffeau A."/>
            <person name="Grivell L.A."/>
            <person name="Hennemann A."/>
            <person name="Herbert C.J."/>
            <person name="Heumann K."/>
            <person name="Hilger F."/>
            <person name="Hollenberg C.P."/>
            <person name="Huang M.-E."/>
            <person name="Jacq C."/>
            <person name="Jauniaux J.-C."/>
            <person name="Katsoulou C."/>
            <person name="Kirchrath L."/>
            <person name="Kleine K."/>
            <person name="Kordes E."/>
            <person name="Koetter P."/>
            <person name="Liebl S."/>
            <person name="Louis E.J."/>
            <person name="Manus V."/>
            <person name="Mewes H.-W."/>
            <person name="Miosga T."/>
            <person name="Obermaier B."/>
            <person name="Perea J."/>
            <person name="Pohl T.M."/>
            <person name="Portetelle D."/>
            <person name="Pujol A."/>
            <person name="Purnelle B."/>
            <person name="Ramezani Rad M."/>
            <person name="Rasmussen S.W."/>
            <person name="Rose M."/>
            <person name="Rossau R."/>
            <person name="Schaaff-Gerstenschlaeger I."/>
            <person name="Smits P.H.M."/>
            <person name="Scarcez T."/>
            <person name="Soriano N."/>
            <person name="To Van D."/>
            <person name="Tzermia M."/>
            <person name="Van Broekhoven A."/>
            <person name="Vandenbol M."/>
            <person name="Wedler H."/>
            <person name="von Wettstein D."/>
            <person name="Wambutt R."/>
            <person name="Zagulski M."/>
            <person name="Zollner A."/>
            <person name="Karpfinger-Hartl L."/>
        </authorList>
    </citation>
    <scope>NUCLEOTIDE SEQUENCE [LARGE SCALE GENOMIC DNA]</scope>
    <source>
        <strain>ATCC 204508 / S288c</strain>
    </source>
</reference>
<reference key="4">
    <citation type="journal article" date="2014" name="G3 (Bethesda)">
        <title>The reference genome sequence of Saccharomyces cerevisiae: Then and now.</title>
        <authorList>
            <person name="Engel S.R."/>
            <person name="Dietrich F.S."/>
            <person name="Fisk D.G."/>
            <person name="Binkley G."/>
            <person name="Balakrishnan R."/>
            <person name="Costanzo M.C."/>
            <person name="Dwight S.S."/>
            <person name="Hitz B.C."/>
            <person name="Karra K."/>
            <person name="Nash R.S."/>
            <person name="Weng S."/>
            <person name="Wong E.D."/>
            <person name="Lloyd P."/>
            <person name="Skrzypek M.S."/>
            <person name="Miyasato S.R."/>
            <person name="Simison M."/>
            <person name="Cherry J.M."/>
        </authorList>
    </citation>
    <scope>GENOME REANNOTATION</scope>
    <source>
        <strain>ATCC 204508 / S288c</strain>
    </source>
</reference>
<reference key="5">
    <citation type="journal article" date="2017" name="Proc. Natl. Acad. Sci. U.S.A.">
        <title>Nit1 is a metabolite repair enzyme that hydrolyzes deaminated glutathione.</title>
        <authorList>
            <person name="Peracchi A."/>
            <person name="Veiga-da-Cunha M."/>
            <person name="Kuhara T."/>
            <person name="Ellens K.W."/>
            <person name="Paczia N."/>
            <person name="Stroobant V."/>
            <person name="Seliga A.K."/>
            <person name="Marlaire S."/>
            <person name="Jaisson S."/>
            <person name="Bommer G.T."/>
            <person name="Sun J."/>
            <person name="Huebner K."/>
            <person name="Linster C.L."/>
            <person name="Cooper A.J.L."/>
            <person name="Van Schaftingen E."/>
        </authorList>
    </citation>
    <scope>FUNCTION</scope>
    <scope>CATALYTIC ACTIVITY</scope>
    <scope>BIOPHYSICOCHEMICAL PROPERTIES</scope>
</reference>
<reference key="6">
    <citation type="journal article" date="2013" name="Acta Crystallogr. D">
        <title>Structures of enzyme-intermediate complexes of yeast Nit2: insights into its catalytic mechanism and different substrate specificity compared with mammalian Nit2.</title>
        <authorList>
            <person name="Liu H."/>
            <person name="Gao Y."/>
            <person name="Zhang M."/>
            <person name="Qiu X."/>
            <person name="Cooper A.J."/>
            <person name="Niu L."/>
            <person name="Teng M."/>
        </authorList>
    </citation>
    <scope>X-RAY CRYSTALLOGRAPHY (1.91 ANGSTROMS) IN COMPLEXES WITH 2-OXOGLUTARATE AND OXALOACETATE</scope>
    <scope>ACTIVE SITE</scope>
    <scope>SUBUNIT</scope>
    <scope>MUTAGENESIS OF CYS-169</scope>
    <scope>FUNCTION</scope>
</reference>
<accession>P47016</accession>
<accession>D6VW60</accession>
<accession>Q71SQ0</accession>
<name>NIT2_YEAST</name>
<protein>
    <recommendedName>
        <fullName evidence="5">Deaminated glutathione amidase</fullName>
        <shortName evidence="5">dGSH amidase</shortName>
        <ecNumber evidence="4">3.5.1.128</ecNumber>
    </recommendedName>
    <alternativeName>
        <fullName>Nitrilase homolog 1</fullName>
    </alternativeName>
</protein>
<sequence length="307" mass="34693">MTSKLKRVAVAQLCSSADLTKNLKVVKELISEAIQKKADVVFLPEASDYLSQNPLHSRYLAQKSPKFIRQLQSSITDLVRDNSRNIDVSIGVHLPPSEQDLLEGNDRVRNVLLYIDHEGKILQEYQKLHLFDVDVPNGPILKESKSVQPGKAIPDIIESPLGKLGSAICYDIRFPEFSLKLRSMGAEILCFPSAFTIKTGEAHWELLGRARAVDTQCYVLMPGQVGMHDLSDPEWEKQSHMSALEKSSRRESWGHSMVIDPWGKIIAHADPSTVGPQLILADLDRELLQEIRNKMPLWNQRRDDLFH</sequence>
<feature type="chain" id="PRO_0000213255" description="Deaminated glutathione amidase">
    <location>
        <begin position="1"/>
        <end position="307"/>
    </location>
</feature>
<feature type="domain" description="CN hydrolase" evidence="2">
    <location>
        <begin position="6"/>
        <end position="285"/>
    </location>
</feature>
<feature type="active site" description="Proton acceptor" evidence="2">
    <location>
        <position position="45"/>
    </location>
</feature>
<feature type="active site" description="Proton donor" evidence="2">
    <location>
        <position position="127"/>
    </location>
</feature>
<feature type="active site" description="Nucleophile" evidence="2 3">
    <location>
        <position position="169"/>
    </location>
</feature>
<feature type="binding site" evidence="3">
    <location>
        <position position="173"/>
    </location>
    <ligand>
        <name>substrate</name>
    </ligand>
</feature>
<feature type="binding site" evidence="3">
    <location>
        <position position="199"/>
    </location>
    <ligand>
        <name>substrate</name>
    </ligand>
</feature>
<feature type="mutagenesis site" description="Abolishes enzyme activity." evidence="3">
    <original>C</original>
    <variation>S</variation>
    <location>
        <position position="169"/>
    </location>
</feature>
<feature type="strand" evidence="7">
    <location>
        <begin position="5"/>
        <end position="13"/>
    </location>
</feature>
<feature type="helix" evidence="7">
    <location>
        <begin position="19"/>
        <end position="35"/>
    </location>
</feature>
<feature type="strand" evidence="7">
    <location>
        <begin position="39"/>
        <end position="42"/>
    </location>
</feature>
<feature type="helix" evidence="7">
    <location>
        <begin position="54"/>
        <end position="61"/>
    </location>
</feature>
<feature type="helix" evidence="7">
    <location>
        <begin position="64"/>
        <end position="82"/>
    </location>
</feature>
<feature type="strand" evidence="7">
    <location>
        <begin position="87"/>
        <end position="94"/>
    </location>
</feature>
<feature type="helix" evidence="7">
    <location>
        <begin position="98"/>
        <end position="102"/>
    </location>
</feature>
<feature type="strand" evidence="7">
    <location>
        <begin position="108"/>
        <end position="115"/>
    </location>
</feature>
<feature type="strand" evidence="7">
    <location>
        <begin position="121"/>
        <end position="126"/>
    </location>
</feature>
<feature type="strand" evidence="7">
    <location>
        <begin position="132"/>
        <end position="134"/>
    </location>
</feature>
<feature type="strand" evidence="7">
    <location>
        <begin position="140"/>
        <end position="142"/>
    </location>
</feature>
<feature type="helix" evidence="7">
    <location>
        <begin position="143"/>
        <end position="145"/>
    </location>
</feature>
<feature type="strand" evidence="7">
    <location>
        <begin position="157"/>
        <end position="159"/>
    </location>
</feature>
<feature type="strand" evidence="7">
    <location>
        <begin position="162"/>
        <end position="166"/>
    </location>
</feature>
<feature type="helix" evidence="7">
    <location>
        <begin position="171"/>
        <end position="173"/>
    </location>
</feature>
<feature type="helix" evidence="7">
    <location>
        <begin position="175"/>
        <end position="184"/>
    </location>
</feature>
<feature type="strand" evidence="7">
    <location>
        <begin position="187"/>
        <end position="190"/>
    </location>
</feature>
<feature type="helix" evidence="7">
    <location>
        <begin position="197"/>
        <end position="215"/>
    </location>
</feature>
<feature type="strand" evidence="7">
    <location>
        <begin position="218"/>
        <end position="221"/>
    </location>
</feature>
<feature type="strand" evidence="7">
    <location>
        <begin position="223"/>
        <end position="227"/>
    </location>
</feature>
<feature type="helix" evidence="7">
    <location>
        <begin position="233"/>
        <end position="238"/>
    </location>
</feature>
<feature type="turn" evidence="7">
    <location>
        <begin position="243"/>
        <end position="246"/>
    </location>
</feature>
<feature type="strand" evidence="7">
    <location>
        <begin position="251"/>
        <end position="253"/>
    </location>
</feature>
<feature type="strand" evidence="7">
    <location>
        <begin position="257"/>
        <end position="259"/>
    </location>
</feature>
<feature type="strand" evidence="7">
    <location>
        <begin position="265"/>
        <end position="268"/>
    </location>
</feature>
<feature type="strand" evidence="7">
    <location>
        <begin position="277"/>
        <end position="284"/>
    </location>
</feature>
<feature type="helix" evidence="7">
    <location>
        <begin position="285"/>
        <end position="294"/>
    </location>
</feature>
<feature type="helix" evidence="7">
    <location>
        <begin position="297"/>
        <end position="299"/>
    </location>
</feature>
<feature type="turn" evidence="7">
    <location>
        <begin position="303"/>
        <end position="305"/>
    </location>
</feature>
<evidence type="ECO:0000250" key="1">
    <source>
        <dbReference type="UniProtKB" id="Q8VDK1"/>
    </source>
</evidence>
<evidence type="ECO:0000255" key="2">
    <source>
        <dbReference type="PROSITE-ProRule" id="PRU00054"/>
    </source>
</evidence>
<evidence type="ECO:0000269" key="3">
    <source>
    </source>
</evidence>
<evidence type="ECO:0000269" key="4">
    <source>
    </source>
</evidence>
<evidence type="ECO:0000303" key="5">
    <source>
    </source>
</evidence>
<evidence type="ECO:0000305" key="6"/>
<evidence type="ECO:0007829" key="7">
    <source>
        <dbReference type="PDB" id="4HG5"/>
    </source>
</evidence>
<organism>
    <name type="scientific">Saccharomyces cerevisiae (strain ATCC 204508 / S288c)</name>
    <name type="common">Baker's yeast</name>
    <dbReference type="NCBI Taxonomy" id="559292"/>
    <lineage>
        <taxon>Eukaryota</taxon>
        <taxon>Fungi</taxon>
        <taxon>Dikarya</taxon>
        <taxon>Ascomycota</taxon>
        <taxon>Saccharomycotina</taxon>
        <taxon>Saccharomycetes</taxon>
        <taxon>Saccharomycetales</taxon>
        <taxon>Saccharomycetaceae</taxon>
        <taxon>Saccharomyces</taxon>
    </lineage>
</organism>